<proteinExistence type="inferred from homology"/>
<comment type="function">
    <text evidence="1">Associates with aggregated proteins, together with IbpB, to stabilize and protect them from irreversible denaturation and extensive proteolysis during heat shock and oxidative stress. Aggregated proteins bound to the IbpAB complex are more efficiently refolded and reactivated by the ATP-dependent chaperone systems ClpB and DnaK/DnaJ/GrpE. Its activity is ATP-independent.</text>
</comment>
<comment type="subunit">
    <text evidence="1">Monomer. Forms homomultimers of about 100-150 subunits at optimal growth temperatures. Conformation changes to monomers at high temperatures or high ionic concentrations.</text>
</comment>
<comment type="subcellular location">
    <subcellularLocation>
        <location evidence="1">Cytoplasm</location>
    </subcellularLocation>
</comment>
<comment type="similarity">
    <text evidence="1 2">Belongs to the small heat shock protein (HSP20) family.</text>
</comment>
<protein>
    <recommendedName>
        <fullName evidence="1">Small heat shock protein IbpA</fullName>
    </recommendedName>
    <alternativeName>
        <fullName evidence="1">16 kDa heat shock protein A</fullName>
    </alternativeName>
</protein>
<accession>B1X9B7</accession>
<gene>
    <name evidence="1" type="primary">ibpA</name>
    <name type="ordered locus">ECDH10B_3873</name>
</gene>
<sequence>MRNFDLSPLYRSAIGFDRLFNHLENNQSQSNGGYPPYNVELVDENHYRIAIAVAGFAESELEITAQDNLLVVKGAHADEQKERTYLYQGIAERNFERKFQLAENIHVRGANLVNGLLYIDLERVIPEAKKPRRIEIN</sequence>
<reference key="1">
    <citation type="journal article" date="2008" name="J. Bacteriol.">
        <title>The complete genome sequence of Escherichia coli DH10B: insights into the biology of a laboratory workhorse.</title>
        <authorList>
            <person name="Durfee T."/>
            <person name="Nelson R."/>
            <person name="Baldwin S."/>
            <person name="Plunkett G. III"/>
            <person name="Burland V."/>
            <person name="Mau B."/>
            <person name="Petrosino J.F."/>
            <person name="Qin X."/>
            <person name="Muzny D.M."/>
            <person name="Ayele M."/>
            <person name="Gibbs R.A."/>
            <person name="Csorgo B."/>
            <person name="Posfai G."/>
            <person name="Weinstock G.M."/>
            <person name="Blattner F.R."/>
        </authorList>
    </citation>
    <scope>NUCLEOTIDE SEQUENCE [LARGE SCALE GENOMIC DNA]</scope>
    <source>
        <strain>K12 / DH10B</strain>
    </source>
</reference>
<organism>
    <name type="scientific">Escherichia coli (strain K12 / DH10B)</name>
    <dbReference type="NCBI Taxonomy" id="316385"/>
    <lineage>
        <taxon>Bacteria</taxon>
        <taxon>Pseudomonadati</taxon>
        <taxon>Pseudomonadota</taxon>
        <taxon>Gammaproteobacteria</taxon>
        <taxon>Enterobacterales</taxon>
        <taxon>Enterobacteriaceae</taxon>
        <taxon>Escherichia</taxon>
    </lineage>
</organism>
<keyword id="KW-0143">Chaperone</keyword>
<keyword id="KW-0963">Cytoplasm</keyword>
<keyword id="KW-0346">Stress response</keyword>
<evidence type="ECO:0000255" key="1">
    <source>
        <dbReference type="HAMAP-Rule" id="MF_02000"/>
    </source>
</evidence>
<evidence type="ECO:0000255" key="2">
    <source>
        <dbReference type="PROSITE-ProRule" id="PRU00285"/>
    </source>
</evidence>
<dbReference type="EMBL" id="CP000948">
    <property type="protein sequence ID" value="ACB04733.1"/>
    <property type="molecule type" value="Genomic_DNA"/>
</dbReference>
<dbReference type="RefSeq" id="WP_001243437.1">
    <property type="nucleotide sequence ID" value="NC_010473.1"/>
</dbReference>
<dbReference type="SMR" id="B1X9B7"/>
<dbReference type="GeneID" id="93778428"/>
<dbReference type="KEGG" id="ecd:ECDH10B_3873"/>
<dbReference type="HOGENOM" id="CLU_046737_4_2_6"/>
<dbReference type="GO" id="GO:0005737">
    <property type="term" value="C:cytoplasm"/>
    <property type="evidence" value="ECO:0007669"/>
    <property type="project" value="UniProtKB-SubCell"/>
</dbReference>
<dbReference type="GO" id="GO:0050821">
    <property type="term" value="P:protein stabilization"/>
    <property type="evidence" value="ECO:0007669"/>
    <property type="project" value="UniProtKB-UniRule"/>
</dbReference>
<dbReference type="CDD" id="cd06470">
    <property type="entry name" value="ACD_IbpA-B_like"/>
    <property type="match status" value="1"/>
</dbReference>
<dbReference type="FunFam" id="2.60.40.790:FF:000002">
    <property type="entry name" value="Small heat shock protein IbpA"/>
    <property type="match status" value="1"/>
</dbReference>
<dbReference type="Gene3D" id="2.60.40.790">
    <property type="match status" value="1"/>
</dbReference>
<dbReference type="HAMAP" id="MF_02000">
    <property type="entry name" value="HSP20_IbpA"/>
    <property type="match status" value="1"/>
</dbReference>
<dbReference type="InterPro" id="IPR002068">
    <property type="entry name" value="A-crystallin/Hsp20_dom"/>
</dbReference>
<dbReference type="InterPro" id="IPR037913">
    <property type="entry name" value="ACD_IbpA/B"/>
</dbReference>
<dbReference type="InterPro" id="IPR008978">
    <property type="entry name" value="HSP20-like_chaperone"/>
</dbReference>
<dbReference type="InterPro" id="IPR023728">
    <property type="entry name" value="HSP20_IbpA"/>
</dbReference>
<dbReference type="NCBIfam" id="NF008013">
    <property type="entry name" value="PRK10743.1"/>
    <property type="match status" value="1"/>
</dbReference>
<dbReference type="PANTHER" id="PTHR47062">
    <property type="match status" value="1"/>
</dbReference>
<dbReference type="PANTHER" id="PTHR47062:SF1">
    <property type="entry name" value="SMALL HEAT SHOCK PROTEIN IBPA"/>
    <property type="match status" value="1"/>
</dbReference>
<dbReference type="Pfam" id="PF00011">
    <property type="entry name" value="HSP20"/>
    <property type="match status" value="1"/>
</dbReference>
<dbReference type="SUPFAM" id="SSF49764">
    <property type="entry name" value="HSP20-like chaperones"/>
    <property type="match status" value="1"/>
</dbReference>
<dbReference type="PROSITE" id="PS01031">
    <property type="entry name" value="SHSP"/>
    <property type="match status" value="1"/>
</dbReference>
<feature type="chain" id="PRO_1000189083" description="Small heat shock protein IbpA">
    <location>
        <begin position="1"/>
        <end position="137"/>
    </location>
</feature>
<feature type="domain" description="sHSP" evidence="2">
    <location>
        <begin position="28"/>
        <end position="137"/>
    </location>
</feature>
<name>IBPA_ECODH</name>